<gene>
    <name evidence="1" type="primary">dnaG</name>
    <name type="ordered locus">YG5714_2167</name>
</gene>
<organism>
    <name type="scientific">Saccharolobus islandicus (strain Y.G.57.14 / Yellowstone #1)</name>
    <name type="common">Sulfolobus islandicus</name>
    <dbReference type="NCBI Taxonomy" id="439386"/>
    <lineage>
        <taxon>Archaea</taxon>
        <taxon>Thermoproteota</taxon>
        <taxon>Thermoprotei</taxon>
        <taxon>Sulfolobales</taxon>
        <taxon>Sulfolobaceae</taxon>
        <taxon>Saccharolobus</taxon>
    </lineage>
</organism>
<name>DNAG_SACI7</name>
<evidence type="ECO:0000255" key="1">
    <source>
        <dbReference type="HAMAP-Rule" id="MF_00007"/>
    </source>
</evidence>
<keyword id="KW-0235">DNA replication</keyword>
<keyword id="KW-0240">DNA-directed RNA polymerase</keyword>
<keyword id="KW-0271">Exosome</keyword>
<keyword id="KW-0460">Magnesium</keyword>
<keyword id="KW-0479">Metal-binding</keyword>
<keyword id="KW-0548">Nucleotidyltransferase</keyword>
<keyword id="KW-0639">Primosome</keyword>
<keyword id="KW-0804">Transcription</keyword>
<keyword id="KW-0808">Transferase</keyword>
<sequence>MKYDIKLRFEVEGIVEKTDVIGAIFGQTENLFGDEFDLRELQDKGRLGRIIVEIRTKGGKSEGEIIIPSNLDRIETALIAAMVESVDKVGPYNSKFELIEIEDIRAEKLKKIIERAKGILSSWSKEKSLDIKEVINEISSAVKVGEITEYGPERLPAGPDVDKDPNLIIVEGRADVINLLRYGYKNVIAVEGATSRIPETVVSLSKMKKTVIAFLDGDHGGDLILKELLSNNVKIDFVARAPVGREVEELTGKEIAKALSNMMPLTQYLKKIQEAEQAIAKNVIAKEEKPIQLEATQQLVQITLPQNVLEEIKKLPGTLEGVLYDNNWNLIEKVQVRDIIPKLEAYEDNKVAYIVFDGVITQRLLDLASQKNIKMIIGARIGGINKRPQNVDILTFTDIISS</sequence>
<feature type="chain" id="PRO_1000201713" description="DNA primase DnaG">
    <location>
        <begin position="1"/>
        <end position="402"/>
    </location>
</feature>
<feature type="domain" description="Toprim" evidence="1">
    <location>
        <begin position="165"/>
        <end position="243"/>
    </location>
</feature>
<feature type="binding site" evidence="1">
    <location>
        <position position="171"/>
    </location>
    <ligand>
        <name>Mg(2+)</name>
        <dbReference type="ChEBI" id="CHEBI:18420"/>
        <label>1</label>
        <note>catalytic</note>
    </ligand>
</feature>
<feature type="binding site" evidence="1">
    <location>
        <position position="216"/>
    </location>
    <ligand>
        <name>Mg(2+)</name>
        <dbReference type="ChEBI" id="CHEBI:18420"/>
        <label>1</label>
        <note>catalytic</note>
    </ligand>
</feature>
<feature type="binding site" evidence="1">
    <location>
        <position position="216"/>
    </location>
    <ligand>
        <name>Mg(2+)</name>
        <dbReference type="ChEBI" id="CHEBI:18420"/>
        <label>2</label>
    </ligand>
</feature>
<feature type="binding site" evidence="1">
    <location>
        <position position="218"/>
    </location>
    <ligand>
        <name>Mg(2+)</name>
        <dbReference type="ChEBI" id="CHEBI:18420"/>
        <label>2</label>
    </ligand>
</feature>
<reference key="1">
    <citation type="journal article" date="2009" name="Proc. Natl. Acad. Sci. U.S.A.">
        <title>Biogeography of the Sulfolobus islandicus pan-genome.</title>
        <authorList>
            <person name="Reno M.L."/>
            <person name="Held N.L."/>
            <person name="Fields C.J."/>
            <person name="Burke P.V."/>
            <person name="Whitaker R.J."/>
        </authorList>
    </citation>
    <scope>NUCLEOTIDE SEQUENCE [LARGE SCALE GENOMIC DNA]</scope>
    <source>
        <strain>Y.G.57.14 / Yellowstone #1</strain>
    </source>
</reference>
<protein>
    <recommendedName>
        <fullName evidence="1">DNA primase DnaG</fullName>
        <ecNumber evidence="1">2.7.7.101</ecNumber>
    </recommendedName>
</protein>
<accession>C3N8R1</accession>
<proteinExistence type="inferred from homology"/>
<comment type="function">
    <text evidence="1">RNA polymerase that catalyzes the synthesis of short RNA molecules used as primers for DNA polymerase during DNA replication. Also part of the exosome, which is a complex involved in RNA degradation. Acts as a poly(A)-binding protein that enhances the interaction between heteromeric, adenine-rich transcripts and the exosome.</text>
</comment>
<comment type="catalytic activity">
    <reaction evidence="1">
        <text>ssDNA + n NTP = ssDNA/pppN(pN)n-1 hybrid + (n-1) diphosphate.</text>
        <dbReference type="EC" id="2.7.7.101"/>
    </reaction>
</comment>
<comment type="cofactor">
    <cofactor evidence="1">
        <name>Mg(2+)</name>
        <dbReference type="ChEBI" id="CHEBI:18420"/>
    </cofactor>
    <text evidence="1">Binds two Mg(2+) per subunit.</text>
</comment>
<comment type="subunit">
    <text evidence="1">Forms a ternary complex with MCM helicase and DNA. Component of the archaeal exosome complex.</text>
</comment>
<comment type="similarity">
    <text evidence="1">Belongs to the archaeal DnaG primase family.</text>
</comment>
<dbReference type="EC" id="2.7.7.101" evidence="1"/>
<dbReference type="EMBL" id="CP001403">
    <property type="protein sequence ID" value="ACP46416.1"/>
    <property type="molecule type" value="Genomic_DNA"/>
</dbReference>
<dbReference type="RefSeq" id="WP_012712008.1">
    <property type="nucleotide sequence ID" value="NC_012622.1"/>
</dbReference>
<dbReference type="SMR" id="C3N8R1"/>
<dbReference type="GeneID" id="84059392"/>
<dbReference type="KEGG" id="siy:YG5714_2167"/>
<dbReference type="HOGENOM" id="CLU_034626_0_0_2"/>
<dbReference type="Proteomes" id="UP000002308">
    <property type="component" value="Chromosome"/>
</dbReference>
<dbReference type="GO" id="GO:0005737">
    <property type="term" value="C:cytoplasm"/>
    <property type="evidence" value="ECO:0007669"/>
    <property type="project" value="TreeGrafter"/>
</dbReference>
<dbReference type="GO" id="GO:0000428">
    <property type="term" value="C:DNA-directed RNA polymerase complex"/>
    <property type="evidence" value="ECO:0007669"/>
    <property type="project" value="UniProtKB-KW"/>
</dbReference>
<dbReference type="GO" id="GO:0000178">
    <property type="term" value="C:exosome (RNase complex)"/>
    <property type="evidence" value="ECO:0007669"/>
    <property type="project" value="UniProtKB-KW"/>
</dbReference>
<dbReference type="GO" id="GO:1990077">
    <property type="term" value="C:primosome complex"/>
    <property type="evidence" value="ECO:0007669"/>
    <property type="project" value="UniProtKB-KW"/>
</dbReference>
<dbReference type="GO" id="GO:0003899">
    <property type="term" value="F:DNA-directed RNA polymerase activity"/>
    <property type="evidence" value="ECO:0007669"/>
    <property type="project" value="InterPro"/>
</dbReference>
<dbReference type="GO" id="GO:0046872">
    <property type="term" value="F:metal ion binding"/>
    <property type="evidence" value="ECO:0007669"/>
    <property type="project" value="UniProtKB-KW"/>
</dbReference>
<dbReference type="GO" id="GO:0008143">
    <property type="term" value="F:poly(A) binding"/>
    <property type="evidence" value="ECO:0007669"/>
    <property type="project" value="InterPro"/>
</dbReference>
<dbReference type="GO" id="GO:0006269">
    <property type="term" value="P:DNA replication, synthesis of primer"/>
    <property type="evidence" value="ECO:0007669"/>
    <property type="project" value="UniProtKB-UniRule"/>
</dbReference>
<dbReference type="CDD" id="cd01029">
    <property type="entry name" value="TOPRIM_primases"/>
    <property type="match status" value="1"/>
</dbReference>
<dbReference type="FunFam" id="3.40.1360.10:FF:000010">
    <property type="entry name" value="DNA primase DnaG"/>
    <property type="match status" value="1"/>
</dbReference>
<dbReference type="Gene3D" id="3.40.1360.10">
    <property type="match status" value="1"/>
</dbReference>
<dbReference type="HAMAP" id="MF_00007">
    <property type="entry name" value="DNA_primase_DnaG_arc"/>
    <property type="match status" value="1"/>
</dbReference>
<dbReference type="InterPro" id="IPR050219">
    <property type="entry name" value="DnaG_primase"/>
</dbReference>
<dbReference type="InterPro" id="IPR020607">
    <property type="entry name" value="Primase_DnaG_arc"/>
</dbReference>
<dbReference type="InterPro" id="IPR034154">
    <property type="entry name" value="TOPRIM_DnaG/twinkle"/>
</dbReference>
<dbReference type="InterPro" id="IPR006171">
    <property type="entry name" value="TOPRIM_dom"/>
</dbReference>
<dbReference type="NCBIfam" id="NF003108">
    <property type="entry name" value="PRK04031.1-1"/>
    <property type="match status" value="1"/>
</dbReference>
<dbReference type="PANTHER" id="PTHR30313">
    <property type="entry name" value="DNA PRIMASE"/>
    <property type="match status" value="1"/>
</dbReference>
<dbReference type="PANTHER" id="PTHR30313:SF2">
    <property type="entry name" value="DNA PRIMASE"/>
    <property type="match status" value="1"/>
</dbReference>
<dbReference type="Pfam" id="PF13662">
    <property type="entry name" value="Toprim_4"/>
    <property type="match status" value="1"/>
</dbReference>
<dbReference type="SMART" id="SM00493">
    <property type="entry name" value="TOPRIM"/>
    <property type="match status" value="1"/>
</dbReference>
<dbReference type="SUPFAM" id="SSF56731">
    <property type="entry name" value="DNA primase core"/>
    <property type="match status" value="1"/>
</dbReference>
<dbReference type="PROSITE" id="PS50880">
    <property type="entry name" value="TOPRIM"/>
    <property type="match status" value="1"/>
</dbReference>